<comment type="function">
    <text>Receptor for the C-X-C chemokine CXCL16. Used as a coreceptor by SIVs and by strains of HIV-2 and m-tropic HIV-1.</text>
</comment>
<comment type="subcellular location">
    <subcellularLocation>
        <location>Cell membrane</location>
        <topology>Multi-pass membrane protein</topology>
    </subcellularLocation>
</comment>
<comment type="similarity">
    <text evidence="2">Belongs to the G-protein coupled receptor 1 family.</text>
</comment>
<reference key="1">
    <citation type="journal article" date="2000" name="J. Virol.">
        <title>Simian immunodeficiency virus utilizes human and sooty mangabey but not rhesus macaque STRL33 for efficient entry.</title>
        <authorList>
            <person name="Pohlmann S."/>
            <person name="Lee B."/>
            <person name="Meister S."/>
            <person name="Krumbiegel M."/>
            <person name="Leslie G."/>
            <person name="Doms R.W."/>
            <person name="Kirchhoff F."/>
        </authorList>
    </citation>
    <scope>NUCLEOTIDE SEQUENCE [GENOMIC DNA]</scope>
</reference>
<protein>
    <recommendedName>
        <fullName>C-X-C chemokine receptor type 6</fullName>
        <shortName>CXC-R6</shortName>
        <shortName>CXCR-6</shortName>
    </recommendedName>
    <alternativeName>
        <fullName>G-protein coupled receptor STRL33</fullName>
    </alternativeName>
    <alternativeName>
        <fullName>G-protein coupled receptor bonzo</fullName>
    </alternativeName>
    <cdAntigenName>CD186</cdAntigenName>
</protein>
<name>CXCR6_CERAT</name>
<dbReference type="EMBL" id="AF237559">
    <property type="protein sequence ID" value="AAF68392.1"/>
    <property type="molecule type" value="Genomic_DNA"/>
</dbReference>
<dbReference type="SMR" id="Q9N0Z0"/>
<dbReference type="STRING" id="9531.ENSCATP00000018056"/>
<dbReference type="GlyCosmos" id="Q9N0Z0">
    <property type="glycosylation" value="1 site, No reported glycans"/>
</dbReference>
<dbReference type="Proteomes" id="UP000233060">
    <property type="component" value="Unassembled WGS sequence"/>
</dbReference>
<dbReference type="GO" id="GO:0009897">
    <property type="term" value="C:external side of plasma membrane"/>
    <property type="evidence" value="ECO:0007669"/>
    <property type="project" value="TreeGrafter"/>
</dbReference>
<dbReference type="GO" id="GO:0019957">
    <property type="term" value="F:C-C chemokine binding"/>
    <property type="evidence" value="ECO:0007669"/>
    <property type="project" value="TreeGrafter"/>
</dbReference>
<dbReference type="GO" id="GO:0016493">
    <property type="term" value="F:C-C chemokine receptor activity"/>
    <property type="evidence" value="ECO:0007669"/>
    <property type="project" value="TreeGrafter"/>
</dbReference>
<dbReference type="GO" id="GO:0016494">
    <property type="term" value="F:C-X-C chemokine receptor activity"/>
    <property type="evidence" value="ECO:0007669"/>
    <property type="project" value="InterPro"/>
</dbReference>
<dbReference type="GO" id="GO:0015026">
    <property type="term" value="F:coreceptor activity"/>
    <property type="evidence" value="ECO:0007669"/>
    <property type="project" value="InterPro"/>
</dbReference>
<dbReference type="GO" id="GO:0019722">
    <property type="term" value="P:calcium-mediated signaling"/>
    <property type="evidence" value="ECO:0007669"/>
    <property type="project" value="TreeGrafter"/>
</dbReference>
<dbReference type="GO" id="GO:0060326">
    <property type="term" value="P:cell chemotaxis"/>
    <property type="evidence" value="ECO:0007669"/>
    <property type="project" value="TreeGrafter"/>
</dbReference>
<dbReference type="GO" id="GO:0006955">
    <property type="term" value="P:immune response"/>
    <property type="evidence" value="ECO:0007669"/>
    <property type="project" value="TreeGrafter"/>
</dbReference>
<dbReference type="GO" id="GO:0006954">
    <property type="term" value="P:inflammatory response"/>
    <property type="evidence" value="ECO:0007669"/>
    <property type="project" value="InterPro"/>
</dbReference>
<dbReference type="GO" id="GO:0007204">
    <property type="term" value="P:positive regulation of cytosolic calcium ion concentration"/>
    <property type="evidence" value="ECO:0007669"/>
    <property type="project" value="TreeGrafter"/>
</dbReference>
<dbReference type="CDD" id="cd15173">
    <property type="entry name" value="7tmA_CXCR6"/>
    <property type="match status" value="1"/>
</dbReference>
<dbReference type="FunFam" id="1.20.1070.10:FF:000035">
    <property type="entry name" value="C-C chemokine receptor type 6"/>
    <property type="match status" value="1"/>
</dbReference>
<dbReference type="Gene3D" id="1.20.1070.10">
    <property type="entry name" value="Rhodopsin 7-helix transmembrane proteins"/>
    <property type="match status" value="1"/>
</dbReference>
<dbReference type="InterPro" id="IPR050119">
    <property type="entry name" value="CCR1-9-like"/>
</dbReference>
<dbReference type="InterPro" id="IPR002235">
    <property type="entry name" value="Chemokine_CXCR6"/>
</dbReference>
<dbReference type="InterPro" id="IPR000355">
    <property type="entry name" value="Chemokine_rcpt"/>
</dbReference>
<dbReference type="InterPro" id="IPR000276">
    <property type="entry name" value="GPCR_Rhodpsn"/>
</dbReference>
<dbReference type="InterPro" id="IPR017452">
    <property type="entry name" value="GPCR_Rhodpsn_7TM"/>
</dbReference>
<dbReference type="PANTHER" id="PTHR10489:SF705">
    <property type="entry name" value="C-X-C CHEMOKINE RECEPTOR TYPE 6"/>
    <property type="match status" value="1"/>
</dbReference>
<dbReference type="PANTHER" id="PTHR10489">
    <property type="entry name" value="CELL ADHESION MOLECULE"/>
    <property type="match status" value="1"/>
</dbReference>
<dbReference type="Pfam" id="PF00001">
    <property type="entry name" value="7tm_1"/>
    <property type="match status" value="1"/>
</dbReference>
<dbReference type="PRINTS" id="PR00657">
    <property type="entry name" value="CCCHEMOKINER"/>
</dbReference>
<dbReference type="PRINTS" id="PR01105">
    <property type="entry name" value="CXCCHMKINER6"/>
</dbReference>
<dbReference type="PRINTS" id="PR00237">
    <property type="entry name" value="GPCRRHODOPSN"/>
</dbReference>
<dbReference type="SUPFAM" id="SSF81321">
    <property type="entry name" value="Family A G protein-coupled receptor-like"/>
    <property type="match status" value="1"/>
</dbReference>
<dbReference type="PROSITE" id="PS00237">
    <property type="entry name" value="G_PROTEIN_RECEP_F1_1"/>
    <property type="match status" value="1"/>
</dbReference>
<dbReference type="PROSITE" id="PS50262">
    <property type="entry name" value="G_PROTEIN_RECEP_F1_2"/>
    <property type="match status" value="1"/>
</dbReference>
<feature type="chain" id="PRO_0000069364" description="C-X-C chemokine receptor type 6">
    <location>
        <begin position="1"/>
        <end position="343"/>
    </location>
</feature>
<feature type="topological domain" description="Extracellular" evidence="1">
    <location>
        <begin position="1"/>
        <end position="33"/>
    </location>
</feature>
<feature type="transmembrane region" description="Helical; Name=1" evidence="1">
    <location>
        <begin position="34"/>
        <end position="60"/>
    </location>
</feature>
<feature type="topological domain" description="Cytoplasmic" evidence="1">
    <location>
        <begin position="61"/>
        <end position="69"/>
    </location>
</feature>
<feature type="transmembrane region" description="Helical; Name=2" evidence="1">
    <location>
        <begin position="70"/>
        <end position="90"/>
    </location>
</feature>
<feature type="topological domain" description="Extracellular" evidence="1">
    <location>
        <begin position="91"/>
        <end position="104"/>
    </location>
</feature>
<feature type="transmembrane region" description="Helical; Name=3" evidence="1">
    <location>
        <begin position="105"/>
        <end position="126"/>
    </location>
</feature>
<feature type="topological domain" description="Cytoplasmic" evidence="1">
    <location>
        <begin position="127"/>
        <end position="144"/>
    </location>
</feature>
<feature type="transmembrane region" description="Helical; Name=4" evidence="1">
    <location>
        <begin position="145"/>
        <end position="165"/>
    </location>
</feature>
<feature type="topological domain" description="Extracellular" evidence="1">
    <location>
        <begin position="166"/>
        <end position="188"/>
    </location>
</feature>
<feature type="transmembrane region" description="Helical; Name=5" evidence="1">
    <location>
        <begin position="189"/>
        <end position="216"/>
    </location>
</feature>
<feature type="topological domain" description="Cytoplasmic" evidence="1">
    <location>
        <begin position="217"/>
        <end position="232"/>
    </location>
</feature>
<feature type="transmembrane region" description="Helical; Name=6" evidence="1">
    <location>
        <begin position="233"/>
        <end position="260"/>
    </location>
</feature>
<feature type="topological domain" description="Extracellular" evidence="1">
    <location>
        <begin position="261"/>
        <end position="276"/>
    </location>
</feature>
<feature type="transmembrane region" description="Helical; Name=7" evidence="1">
    <location>
        <begin position="277"/>
        <end position="294"/>
    </location>
</feature>
<feature type="topological domain" description="Cytoplasmic" evidence="1">
    <location>
        <begin position="295"/>
        <end position="343"/>
    </location>
</feature>
<feature type="glycosylation site" description="N-linked (GlcNAc...) asparagine" evidence="1">
    <location>
        <position position="17"/>
    </location>
</feature>
<feature type="disulfide bond" evidence="2">
    <location>
        <begin position="103"/>
        <end position="181"/>
    </location>
</feature>
<organism>
    <name type="scientific">Cercocebus atys</name>
    <name type="common">Sooty mangabey</name>
    <name type="synonym">Cercocebus torquatus atys</name>
    <dbReference type="NCBI Taxonomy" id="9531"/>
    <lineage>
        <taxon>Eukaryota</taxon>
        <taxon>Metazoa</taxon>
        <taxon>Chordata</taxon>
        <taxon>Craniata</taxon>
        <taxon>Vertebrata</taxon>
        <taxon>Euteleostomi</taxon>
        <taxon>Mammalia</taxon>
        <taxon>Eutheria</taxon>
        <taxon>Euarchontoglires</taxon>
        <taxon>Primates</taxon>
        <taxon>Haplorrhini</taxon>
        <taxon>Catarrhini</taxon>
        <taxon>Cercopithecidae</taxon>
        <taxon>Cercopithecinae</taxon>
        <taxon>Cercocebus</taxon>
    </lineage>
</organism>
<gene>
    <name type="primary">CXCR6</name>
    <name type="synonym">BONZO</name>
    <name type="synonym">STRL33</name>
</gene>
<proteinExistence type="inferred from homology"/>
<evidence type="ECO:0000255" key="1"/>
<evidence type="ECO:0000255" key="2">
    <source>
        <dbReference type="PROSITE-ProRule" id="PRU00521"/>
    </source>
</evidence>
<keyword id="KW-1003">Cell membrane</keyword>
<keyword id="KW-1015">Disulfide bond</keyword>
<keyword id="KW-0297">G-protein coupled receptor</keyword>
<keyword id="KW-0325">Glycoprotein</keyword>
<keyword id="KW-0472">Membrane</keyword>
<keyword id="KW-0675">Receptor</keyword>
<keyword id="KW-1185">Reference proteome</keyword>
<keyword id="KW-0807">Transducer</keyword>
<keyword id="KW-0812">Transmembrane</keyword>
<keyword id="KW-1133">Transmembrane helix</keyword>
<sequence length="343" mass="39589">MAEYDHYEDDEFFNSFNDSSQKEHQDFLQFSKVFLPCMYLVVFVCGLVGNSLVLVISIFYHKLQSLTDVFLVNLPLADLVFVCTLPFWAYAGIHEWIFGQVMCKTLLGVYTINFYTSMLILTCITVDRFIVVVKATKAYNQQAKRMTWGKVICLLIWVISLLVSLPQIIYGNVFNLDKLICRYHDEEISTVVLATQMTLGFFLPLLTMIVCYSVIIKTLLHAGGFQKHRSLKIIFLVMAVFLLTQTPFNLVKLIRSTHWEYYAMTSFHYTIIVTEAIAYLRACLNPVLYAFVSLKFRKNFWKLVKDIGCLPYLGVSHQWKSSEDNSKTFSASHNVEATSMFQL</sequence>
<accession>Q9N0Z0</accession>